<protein>
    <recommendedName>
        <fullName>Cytoplasmic dynein 2 heavy chain 1</fullName>
    </recommendedName>
    <alternativeName>
        <fullName>Abnormal chemotaxis protein 3</fullName>
    </alternativeName>
</protein>
<organism>
    <name type="scientific">Caenorhabditis elegans</name>
    <dbReference type="NCBI Taxonomy" id="6239"/>
    <lineage>
        <taxon>Eukaryota</taxon>
        <taxon>Metazoa</taxon>
        <taxon>Ecdysozoa</taxon>
        <taxon>Nematoda</taxon>
        <taxon>Chromadorea</taxon>
        <taxon>Rhabditida</taxon>
        <taxon>Rhabditina</taxon>
        <taxon>Rhabditomorpha</taxon>
        <taxon>Rhabditoidea</taxon>
        <taxon>Rhabditidae</taxon>
        <taxon>Peloderinae</taxon>
        <taxon>Caenorhabditis</taxon>
    </lineage>
</organism>
<proteinExistence type="evidence at protein level"/>
<sequence>MSSDSKDQRKTYFLRVASYLLGLNIVEEKLKSTEPLEIFLDSNTNLLVFSRSEQKLELSNKMKSSAPSANVFRVVFYKTQSVPLNNDNFKSVVNVISANGTLNHVFLKSVQNVFGKELTEGNNMQLIAAVNELEESLLATVEMSGGGSLHDEIRSWKGQTGKPANDYNEAFKQLQLLVETMEERSIDELSELVECFEDTCDELWNCGTPYPQNRMKMLIEYGASYLCETITFKIDDSAIWRNDKVADQLRSAIDVCDQMLIIVRLLTAQTWKRNVEHTWEGDAMEMKFLNGFKDRLDEILSLKSLGGQLEELLEERGVREETEKTIETAMRGMAPLAYNPFTEPNWKSRLLVSERSIEGTIDRTLPILKQRLAPANGDSQSIVLSLEKLKSFLCRSNIKEKLQHEREMFLNRLVSMLSQKNQEFNEKSLQVDAKNFQFLTEVAARIVWIRQQTSQMESIRSLSKMMLNNISNYSAFASKLDEFIEKLQYAEKECFDDWCRETVGLIDNKNETINLETTGKIMYLEASNRELNVNYSDRLLRLLKEVRQLISLGFNIPSKIMSCANNGEKYYRFGVILKQIAHFYNTIDQQMIPSQQSLMLEEAIAFEKLVIPRKDASNSASKVTWNDPKQLEEFIVQLQSAEQKLSNRNRRLRNVHMELIEMVEKLMDLNIVKQNNEWKEIILKIRSKMKEEEIVHGAVKNNMKPWLIHWDFQLYKALLIQYEWGIESIQSQLSTISVSLVFADQKIQLRPTIEEIRSKYYKELCRFLRIPDKFRGVQEDENSTKFYAQMIERSMHLLPTVYEKAEQLMMKVETCDAIFVDWLVISQVDLEELIEENLKTAADWESQFKILKGKAREAERLPHELKFECILVSTAGVKSAIEDAIQRLYDALSWTLRHSISTTSQSISTFLSQAIEVLNTVPQSIDEIAEANAKHVIFAENNRRLKEEWKVMEEQLTLLRSVAGTGMEQIDNLEQTWDRFELMLDGHQSMIKDQVEVLKSNVETSVKGMKDEAEKLKARWEQFKPRNDALQGDREEMLKAIQFIKEKRVQWQQLSDGREKIEKECGQFGLEPPKMDIIDEIDEDIKQFEDNWLIYEMFNNELDTMSQEEWIVFRSKTYLFDEFLQKWMEKLKGTGSQTHMSVRLMKDVEHFKEVSSALKFCRGDVLSADHWHEMFRFLGLPRGTTIEKLKFADLLSVSKNIIENTDQLKQLNSRAQGEVAIRDAIQELTLWAAQTEFTLADYKHSNGQNLKIIKEWKESINSLKDSQALLQSLKSSPYYSQFTDKTAVWETRLADLDVFLAQMNEIQRKWIYLEPIFGRGALPSEASRFSRVDSEYRAILNDVSKDARLVSLCSRQSLKKSLEQIVDQLNRCQKALNQFLEQKRTAFPRFYFIGDDDLLEILGQSTNPQVIQTHMKKLFQGINRVQFSSTGETIISMVSSEGETVPLSKAVRIVPQVESWLQELSDEMRRTLKDLTAQAVADAQPSLAKYPSQVLCLAEEVKFSASIENNLNGSSDLNSFKSQLLEKLKAYTNMKVDDKVSDLKLKSLILDLIHHIDVVDQLLTNQAKSINSWTWQRQLRFYLVNGGIVLRQVSSEFEYTYEYQGNYAKLVHTPLTDKCYLTLTQAMYMGLGGNPYGPAGTGKTESVKALAALMGRQVLVFNCDEGIDVTSMGRIFTGIVECGAWGCFDEFNRLDSTVLSAVSMQIQTIQGAIKSRAGSCTFGGKNVQVNPNSAIFVTLNPAGKGYGGRQKMPDNLKQLFRAVVMGKPDNELISSTILYSEGFVDATALARKIVSVFQLSRQMLSKQQHYDWGLRALKVVLGGCGALRRTQTNKNETDLVVQALLLNTLSKLTFSDSERFNSLIDDIFSNVTKEMTKFEELVEPLGVAAQEMGIKLGDKQMEKVFQLYEQMRQRIGVVVVGAAGSGKSTIWKILQRSLILTKKPLKVTQFNPKAVNRSKLLGNMDMDTREWSDGIITMAAREVTKDTSVHHWIVCDGDIDPEWVEALNSVLDDNRLLTMPSGERIQFGSNVNFLFETDSLQFASPATVSRMGMIYISEEDVTPKDIVASWLVKTTEDLHADMPSWIEEHFWRCLKWVRSHKISGITSFAILKNGLTHLKASKTKTQFLVLLFNGFLPTVTPENRQEFAKGVVFQGMSVPDPKNICYDERIDGIMSYTDDVSQNVTKEEVEREDLRPFVQTADTQRYSDIIGSWLQSGNRESFLITGTTGCGKQQLLKHCFQNDPESQLASLYCSAQSSSSHLLQLIQQNCVQASNPTGRVWRPKDRPNMILFLKGINLPAPDKYGTNELLALLQQLLTYQGFFDHNLEWVSIENIQFVGSMNPIGDGAAVSISNRLFSLLRCVSLNTTDSSQLTSIYRTYLTPILEEVGERNSEIIANRMVDIYNKVQSNFRPTDSVVFLFSPRDLTNWVVSLLRHELDQGKLEAVICFEARRIFADRLPTENDKLKFEEILRNVIPISQANETVIFKEKVYVTTGTVVPGESNTGLPLTPINMSDFNQLLAKSINRFAFEIANFNCPLTSQLAFFCACIDRVLTGPGGHLFLPGRPGFGRRDSVRLVAHMHNIQVFSPPVTANFSAKQFDNELKNAITQAVTNNEHVVLILEDHQLRKNIFLQAINSLLASGNVPGLFTQQELDGLVALVSEAANQASFTGALQQFLAHRIRSLVHVVLILEVEANDFKINITENPAILKHCNVIFADRFDRNSLVEIPKIQMESQGITTTDAILTGFNDVLVNLPEHLSIQPIKYRQFVENFFQLLGYKRLTLSVRLERLKGGVSKLNEARDEVAKMQKKAGKKSKLLAEKQAEADEALKAITESMSGAEDQKLSMEQLKAATEKENVRIEEQKAKIDEQLKEVQPLIDEARRAVGSIKSESLSEIRSLRAPPEAVRDILQAVLLFMGILDTSWEAMRKFLSKSGVKDDIMNFDANRITNEIHKKVTALVKQKSNSFEEANAKRASAAAAPLAAWVKANLEYSKILEKIAPLEGEKNKLVKNLKKAEKQMENLSKGLQSVDEVVGELKRKFEVLMKEATQIKVDLDREQDTIRIAGTLVESLSGEFERWKIQIETFGEEQSKMELCSLITSAFITYLGGCSEKDRKSLLKSMCKMFNMPPTFKPLSFASLETEQLNWKTKGLPADQLSLENGSILFTSCHAPLIIDRSGQVSLFLSKFLEKSETFKAAQPDLMTQIELAIRFGKTIIIDDIVEFDSALIPILRKDLSSQGPRQVISFGGKSIDFNPDFKIYFCTRDEKVDIRPNSYVQLNIVNFTTTISALSAQLLDVAIHLEKPELEERSSSLLRDAELKKLELEGLEQLLLQQLASSQGNLLENTALLDSLNKSKESAEIITKSIVESEQLHKELTTQKDIYVPLSLFTSSLFFSFSNLQFHNPMYNYSVNTIMHLFGKTIKSCEDKSSTRVETLARQMQLTVFYHISRGIFRQDRLMFAVAFINATMPKMFQPKEWELFTGVLVDESTDLSALRVQWISPDRLQSLARIRTHLPSLFNNFQIQDDATWNEFSKTLQCENAFPKNVELKMTHFQKVLFIQAVKPERLYNCLMDFVLKTLNIPSINPPAFELKHIFQESESTEPILFILADGADPSQELSEFASSMNVPYHSISMGQGQEIAAYEAIRESASKGEWLCLNNLHLMLQAVPSIFKHLSLTTPHENFRLWLTTEGDARFPSMMLQQSLKITFEPPPGVRNNLLRTYTQIDRSTKNVITCQSIFVLAWLHALLQERRTFIPQGWTKFYEFGASDVRVAKSFVEQLTANKADWEFVRGILKFVIYGGRIENDFDFKVLDSYLNVLFCDEKINGRAGSQLVKGIDLLATTNVQEYIGHISKSVPSVDEPYLFGLPENIKYSWQIVEADRTISSIRTLALGDTKNALSDQSDKISQIVSLWKKLCQSDDLPKRELPTAIRSADPISEVLCLETINALSLIKQLHRSIGHVAKSMKTPSLASPAVQKTIQSLVFQQTPDEWDSMWAGPSDPADYLNVVVKKTRGTLQLFESSKSSSLLSSPIDFSDLFYPNIFLNALRQTTSRQIKIPLDQLILSSAWTPSQLPAKQCVQVQGLLLQGATFDSFLRETTVSSAAYSQAPIVFLAWTSESSSTITGEQIQVPVYSSSERSDLICSVNMPCRGADQWNIAAVALFLR</sequence>
<gene>
    <name evidence="7" type="primary">che-3</name>
    <name evidence="7" type="ORF">F18C12.1</name>
</gene>
<reference key="1">
    <citation type="journal article" date="1998" name="Science">
        <title>Genome sequence of the nematode C. elegans: a platform for investigating biology.</title>
        <authorList>
            <consortium name="The C. elegans sequencing consortium"/>
        </authorList>
    </citation>
    <scope>NUCLEOTIDE SEQUENCE [LARGE SCALE GENOMIC DNA]</scope>
    <source>
        <strain>Bristol N2</strain>
    </source>
</reference>
<reference key="2">
    <citation type="journal article" date="1999" name="J. Cell Biol.">
        <title>Role of a class DHC1b dynein in retrograde transport of IFT motors and IFT raft particles along cilia, but not dendrites, in chemosensory neurons of living Caenorhabditis elegans.</title>
        <authorList>
            <person name="Signor D."/>
            <person name="Wedaman K.P."/>
            <person name="Orozco J.T."/>
            <person name="Dwyer N.D."/>
            <person name="Bargmann C.I."/>
            <person name="Rose L.S."/>
            <person name="Scholey J.M."/>
        </authorList>
    </citation>
    <scope>FUNCTION</scope>
</reference>
<reference key="3">
    <citation type="journal article" date="2016" name="Sci. Rep.">
        <title>The nephronophthisis-related gene ift-139 is required for ciliogenesis in Caenorhabditis elegans.</title>
        <authorList>
            <person name="Niwa S."/>
        </authorList>
    </citation>
    <scope>FUNCTION</scope>
    <scope>DISRUPTION PHENOTYPE</scope>
</reference>
<reference key="4">
    <citation type="journal article" date="2017" name="Curr. Biol.">
        <title>Dynein-driven retrograde intraflagellar transport is triphasic in C. elegans sensory cilia.</title>
        <authorList>
            <person name="Yi P."/>
            <person name="Li W.J."/>
            <person name="Dong M.Q."/>
            <person name="Ou G."/>
        </authorList>
    </citation>
    <scope>FUNCTION</scope>
    <scope>DISRUPTION PHENOTYPE</scope>
    <scope>MUTAGENESIS OF ARG-295; ARG-1384; ARG-1693 AND LYS-2935</scope>
</reference>
<accession>Q19542</accession>
<feature type="chain" id="PRO_0000318748" description="Cytoplasmic dynein 2 heavy chain 1">
    <location>
        <begin position="1"/>
        <end position="4171"/>
    </location>
</feature>
<feature type="region of interest" description="Stem" evidence="1">
    <location>
        <begin position="1"/>
        <end position="1598"/>
    </location>
</feature>
<feature type="region of interest" description="AAA 1" evidence="1">
    <location>
        <begin position="1599"/>
        <end position="1823"/>
    </location>
</feature>
<feature type="region of interest" description="AAA 2" evidence="1">
    <location>
        <begin position="1883"/>
        <end position="2100"/>
    </location>
</feature>
<feature type="region of interest" description="AAA 3" evidence="1">
    <location>
        <begin position="2184"/>
        <end position="2432"/>
    </location>
</feature>
<feature type="region of interest" description="AAA 4" evidence="1">
    <location>
        <begin position="2527"/>
        <end position="2767"/>
    </location>
</feature>
<feature type="region of interest" description="Stalk" evidence="1">
    <location>
        <begin position="2776"/>
        <end position="3064"/>
    </location>
</feature>
<feature type="region of interest" description="AAA 5" evidence="1">
    <location>
        <begin position="3140"/>
        <end position="3367"/>
    </location>
</feature>
<feature type="region of interest" description="AAA 6" evidence="1">
    <location>
        <begin position="3575"/>
        <end position="3784"/>
    </location>
</feature>
<feature type="coiled-coil region" evidence="2">
    <location>
        <begin position="164"/>
        <end position="203"/>
    </location>
</feature>
<feature type="coiled-coil region" evidence="2">
    <location>
        <begin position="629"/>
        <end position="693"/>
    </location>
</feature>
<feature type="coiled-coil region" evidence="2">
    <location>
        <begin position="829"/>
        <end position="861"/>
    </location>
</feature>
<feature type="coiled-coil region" evidence="2">
    <location>
        <begin position="927"/>
        <end position="1048"/>
    </location>
</feature>
<feature type="coiled-coil region" evidence="2">
    <location>
        <begin position="1354"/>
        <end position="1383"/>
    </location>
</feature>
<feature type="coiled-coil region" evidence="2">
    <location>
        <begin position="2790"/>
        <end position="2877"/>
    </location>
</feature>
<feature type="coiled-coil region" evidence="2">
    <location>
        <begin position="2999"/>
        <end position="3059"/>
    </location>
</feature>
<feature type="coiled-coil region" evidence="2">
    <location>
        <begin position="3308"/>
        <end position="3336"/>
    </location>
</feature>
<feature type="binding site" evidence="2">
    <location>
        <begin position="115"/>
        <end position="122"/>
    </location>
    <ligand>
        <name>ATP</name>
        <dbReference type="ChEBI" id="CHEBI:30616"/>
    </ligand>
</feature>
<feature type="binding site" evidence="2">
    <location>
        <begin position="1637"/>
        <end position="1644"/>
    </location>
    <ligand>
        <name>ATP</name>
        <dbReference type="ChEBI" id="CHEBI:30616"/>
    </ligand>
</feature>
<feature type="binding site" evidence="2">
    <location>
        <begin position="1921"/>
        <end position="1928"/>
    </location>
    <ligand>
        <name>ATP</name>
        <dbReference type="ChEBI" id="CHEBI:30616"/>
    </ligand>
</feature>
<feature type="binding site" evidence="2">
    <location>
        <begin position="2226"/>
        <end position="2233"/>
    </location>
    <ligand>
        <name>ATP</name>
        <dbReference type="ChEBI" id="CHEBI:30616"/>
    </ligand>
</feature>
<feature type="binding site" evidence="2">
    <location>
        <begin position="2565"/>
        <end position="2572"/>
    </location>
    <ligand>
        <name>ATP</name>
        <dbReference type="ChEBI" id="CHEBI:30616"/>
    </ligand>
</feature>
<feature type="mutagenesis site" description="Shorter cilium, and severely reduced speed and reduced frequency of intraflagellar retrograde transport of mutant protein." evidence="5">
    <original>R</original>
    <variation>C</variation>
    <location>
        <position position="295"/>
    </location>
</feature>
<feature type="mutagenesis site" description="Reduced frequency of intraflagellar retrograde transport of mutant protein." evidence="5">
    <original>R</original>
    <variation>C</variation>
    <location>
        <position position="1384"/>
    </location>
</feature>
<feature type="mutagenesis site" description="Shorter cilium, and reduced speed and frequency of intraflagellar retrograde transport of mutant protein." evidence="5">
    <original>R</original>
    <variation>C</variation>
    <location>
        <position position="1693"/>
    </location>
</feature>
<feature type="mutagenesis site" description="Reduced binding to microtubules. Severely truncated cilium. Accumulates in truncated cilium and does not undergo intraflagellar retrograde transport." evidence="5">
    <original>K</original>
    <variation>Q</variation>
    <location>
        <position position="2935"/>
    </location>
</feature>
<keyword id="KW-0067">ATP-binding</keyword>
<keyword id="KW-1003">Cell membrane</keyword>
<keyword id="KW-0966">Cell projection</keyword>
<keyword id="KW-0969">Cilium</keyword>
<keyword id="KW-0970">Cilium biogenesis/degradation</keyword>
<keyword id="KW-0175">Coiled coil</keyword>
<keyword id="KW-0963">Cytoplasm</keyword>
<keyword id="KW-0206">Cytoskeleton</keyword>
<keyword id="KW-0217">Developmental protein</keyword>
<keyword id="KW-0243">Dynein</keyword>
<keyword id="KW-0472">Membrane</keyword>
<keyword id="KW-0493">Microtubule</keyword>
<keyword id="KW-0505">Motor protein</keyword>
<keyword id="KW-0547">Nucleotide-binding</keyword>
<keyword id="KW-1185">Reference proteome</keyword>
<evidence type="ECO:0000250" key="1"/>
<evidence type="ECO:0000255" key="2"/>
<evidence type="ECO:0000269" key="3">
    <source>
    </source>
</evidence>
<evidence type="ECO:0000269" key="4">
    <source>
    </source>
</evidence>
<evidence type="ECO:0000269" key="5">
    <source>
    </source>
</evidence>
<evidence type="ECO:0000305" key="6"/>
<evidence type="ECO:0000312" key="7">
    <source>
        <dbReference type="WormBase" id="F18C12.1"/>
    </source>
</evidence>
<comment type="function">
    <text evidence="3 4 5">Functions as a motor for intraflagellar retrograde transport in chemosensory neurons (PubMed:10545497, PubMed:28479320). Functions in cilia biogenesis (PubMed:10545497, PubMed:27515926).</text>
</comment>
<comment type="subunit">
    <text evidence="1">The cytoplasmic dynein complex 2 is probably composed by a heavy chain che-3 homodimer and a number of light intermediate chains.</text>
</comment>
<comment type="subcellular location">
    <subcellularLocation>
        <location evidence="1">Cell projection</location>
        <location evidence="1">Cilium membrane</location>
        <topology evidence="1">Peripheral membrane protein</topology>
        <orientation evidence="1">Cytoplasmic side</orientation>
    </subcellularLocation>
    <subcellularLocation>
        <location evidence="1">Cytoplasm</location>
        <location evidence="1">Cytoskeleton</location>
    </subcellularLocation>
</comment>
<comment type="disruption phenotype">
    <text evidence="4 5">Shorter phasmid cilia with an irregular morphology.</text>
</comment>
<comment type="similarity">
    <text evidence="6">Belongs to the dynein heavy chain family.</text>
</comment>
<dbReference type="EMBL" id="Z75536">
    <property type="protein sequence ID" value="CAA99830.2"/>
    <property type="molecule type" value="Genomic_DNA"/>
</dbReference>
<dbReference type="PIR" id="T21085">
    <property type="entry name" value="T21085"/>
</dbReference>
<dbReference type="RefSeq" id="NP_492221.2">
    <property type="nucleotide sequence ID" value="NM_059820.2"/>
</dbReference>
<dbReference type="SMR" id="Q19542"/>
<dbReference type="BioGRID" id="38027">
    <property type="interactions" value="5"/>
</dbReference>
<dbReference type="FunCoup" id="Q19542">
    <property type="interactions" value="565"/>
</dbReference>
<dbReference type="STRING" id="6239.F18C12.1.1"/>
<dbReference type="PaxDb" id="6239-F18C12.1"/>
<dbReference type="PeptideAtlas" id="Q19542"/>
<dbReference type="EnsemblMetazoa" id="F18C12.1.1">
    <property type="protein sequence ID" value="F18C12.1.1"/>
    <property type="gene ID" value="WBGene00000485"/>
</dbReference>
<dbReference type="GeneID" id="172593"/>
<dbReference type="KEGG" id="cel:CELE_F18C12.1"/>
<dbReference type="UCSC" id="F18C12.1">
    <property type="organism name" value="c. elegans"/>
</dbReference>
<dbReference type="AGR" id="WB:WBGene00000485"/>
<dbReference type="CTD" id="172593"/>
<dbReference type="WormBase" id="F18C12.1">
    <property type="protein sequence ID" value="CE32386"/>
    <property type="gene ID" value="WBGene00000485"/>
    <property type="gene designation" value="che-3"/>
</dbReference>
<dbReference type="eggNOG" id="KOG3595">
    <property type="taxonomic scope" value="Eukaryota"/>
</dbReference>
<dbReference type="GeneTree" id="ENSGT00940000154620"/>
<dbReference type="HOGENOM" id="CLU_000038_7_2_1"/>
<dbReference type="InParanoid" id="Q19542"/>
<dbReference type="OMA" id="WCKERVS"/>
<dbReference type="OrthoDB" id="5593012at2759"/>
<dbReference type="PhylomeDB" id="Q19542"/>
<dbReference type="Reactome" id="R-CEL-5620924">
    <property type="pathway name" value="Intraflagellar transport"/>
</dbReference>
<dbReference type="PRO" id="PR:Q19542"/>
<dbReference type="Proteomes" id="UP000001940">
    <property type="component" value="Chromosome I"/>
</dbReference>
<dbReference type="Bgee" id="WBGene00000485">
    <property type="expression patterns" value="Expressed in pharyngeal muscle cell (C elegans) and 3 other cell types or tissues"/>
</dbReference>
<dbReference type="GO" id="GO:0097729">
    <property type="term" value="C:9+2 motile cilium"/>
    <property type="evidence" value="ECO:0000318"/>
    <property type="project" value="GO_Central"/>
</dbReference>
<dbReference type="GO" id="GO:0005930">
    <property type="term" value="C:axoneme"/>
    <property type="evidence" value="ECO:0000318"/>
    <property type="project" value="GO_Central"/>
</dbReference>
<dbReference type="GO" id="GO:0060170">
    <property type="term" value="C:ciliary membrane"/>
    <property type="evidence" value="ECO:0007669"/>
    <property type="project" value="UniProtKB-SubCell"/>
</dbReference>
<dbReference type="GO" id="GO:0005868">
    <property type="term" value="C:cytoplasmic dynein complex"/>
    <property type="evidence" value="ECO:0000318"/>
    <property type="project" value="GO_Central"/>
</dbReference>
<dbReference type="GO" id="GO:0005874">
    <property type="term" value="C:microtubule"/>
    <property type="evidence" value="ECO:0007669"/>
    <property type="project" value="UniProtKB-KW"/>
</dbReference>
<dbReference type="GO" id="GO:0097730">
    <property type="term" value="C:non-motile cilium"/>
    <property type="evidence" value="ECO:0000314"/>
    <property type="project" value="WormBase"/>
</dbReference>
<dbReference type="GO" id="GO:0005524">
    <property type="term" value="F:ATP binding"/>
    <property type="evidence" value="ECO:0007669"/>
    <property type="project" value="UniProtKB-KW"/>
</dbReference>
<dbReference type="GO" id="GO:0045505">
    <property type="term" value="F:dynein intermediate chain binding"/>
    <property type="evidence" value="ECO:0000318"/>
    <property type="project" value="GO_Central"/>
</dbReference>
<dbReference type="GO" id="GO:0051959">
    <property type="term" value="F:dynein light intermediate chain binding"/>
    <property type="evidence" value="ECO:0000250"/>
    <property type="project" value="WormBase"/>
</dbReference>
<dbReference type="GO" id="GO:0003777">
    <property type="term" value="F:microtubule motor activity"/>
    <property type="evidence" value="ECO:0000250"/>
    <property type="project" value="WormBase"/>
</dbReference>
<dbReference type="GO" id="GO:0008569">
    <property type="term" value="F:minus-end-directed microtubule motor activity"/>
    <property type="evidence" value="ECO:0000318"/>
    <property type="project" value="GO_Central"/>
</dbReference>
<dbReference type="GO" id="GO:0007635">
    <property type="term" value="P:chemosensory behavior"/>
    <property type="evidence" value="ECO:0000315"/>
    <property type="project" value="WormBase"/>
</dbReference>
<dbReference type="GO" id="GO:0060271">
    <property type="term" value="P:cilium assembly"/>
    <property type="evidence" value="ECO:0000316"/>
    <property type="project" value="UniProtKB"/>
</dbReference>
<dbReference type="GO" id="GO:0060294">
    <property type="term" value="P:cilium movement involved in cell motility"/>
    <property type="evidence" value="ECO:0000318"/>
    <property type="project" value="GO_Central"/>
</dbReference>
<dbReference type="GO" id="GO:0043053">
    <property type="term" value="P:dauer entry"/>
    <property type="evidence" value="ECO:0000316"/>
    <property type="project" value="UniProtKB"/>
</dbReference>
<dbReference type="GO" id="GO:0035721">
    <property type="term" value="P:intraciliary retrograde transport"/>
    <property type="evidence" value="ECO:0000318"/>
    <property type="project" value="GO_Central"/>
</dbReference>
<dbReference type="GO" id="GO:0030512">
    <property type="term" value="P:negative regulation of transforming growth factor beta receptor signaling pathway"/>
    <property type="evidence" value="ECO:0000316"/>
    <property type="project" value="WormBase"/>
</dbReference>
<dbReference type="GO" id="GO:1905515">
    <property type="term" value="P:non-motile cilium assembly"/>
    <property type="evidence" value="ECO:0000315"/>
    <property type="project" value="WormBase"/>
</dbReference>
<dbReference type="GO" id="GO:0061066">
    <property type="term" value="P:positive regulation of dauer larval development"/>
    <property type="evidence" value="ECO:0000315"/>
    <property type="project" value="WormBase"/>
</dbReference>
<dbReference type="GO" id="GO:0008104">
    <property type="term" value="P:protein localization"/>
    <property type="evidence" value="ECO:0000315"/>
    <property type="project" value="WormBase"/>
</dbReference>
<dbReference type="FunFam" id="1.20.920.20:FF:000002">
    <property type="entry name" value="Cytoplasmic dynein 1 heavy chain"/>
    <property type="match status" value="1"/>
</dbReference>
<dbReference type="FunFam" id="1.20.920.30:FF:000006">
    <property type="entry name" value="Cytoplasmic dynein 2 heavy chain 1"/>
    <property type="match status" value="1"/>
</dbReference>
<dbReference type="FunFam" id="3.40.50.300:FF:000706">
    <property type="entry name" value="Cytoplasmic dynein 2 heavy chain 1"/>
    <property type="match status" value="1"/>
</dbReference>
<dbReference type="FunFam" id="3.40.50.300:FF:002798">
    <property type="entry name" value="Cytoplasmic dynein 2 heavy chain 1"/>
    <property type="match status" value="1"/>
</dbReference>
<dbReference type="FunFam" id="1.20.140.100:FF:000002">
    <property type="entry name" value="Cytoplasmic dynein heavy chain 1"/>
    <property type="match status" value="1"/>
</dbReference>
<dbReference type="FunFam" id="3.20.180.20:FF:000002">
    <property type="entry name" value="Cytoplasmic dynein heavy chain 1"/>
    <property type="match status" value="1"/>
</dbReference>
<dbReference type="FunFam" id="3.40.50.300:FF:000071">
    <property type="entry name" value="Cytoplasmic dynein heavy chain 1"/>
    <property type="match status" value="1"/>
</dbReference>
<dbReference type="FunFam" id="1.10.8.710:FF:000001">
    <property type="entry name" value="Dynein axonemal heavy chain 2"/>
    <property type="match status" value="1"/>
</dbReference>
<dbReference type="FunFam" id="1.20.58.1120:FF:000019">
    <property type="entry name" value="Dynein heavy chain, putative"/>
    <property type="match status" value="1"/>
</dbReference>
<dbReference type="FunFam" id="3.40.50.300:FF:001685">
    <property type="entry name" value="Dynein heavy chain, putative"/>
    <property type="match status" value="1"/>
</dbReference>
<dbReference type="Gene3D" id="1.10.8.1220">
    <property type="match status" value="1"/>
</dbReference>
<dbReference type="Gene3D" id="1.10.8.710">
    <property type="match status" value="1"/>
</dbReference>
<dbReference type="Gene3D" id="1.20.58.1120">
    <property type="match status" value="1"/>
</dbReference>
<dbReference type="Gene3D" id="1.20.920.20">
    <property type="match status" value="1"/>
</dbReference>
<dbReference type="Gene3D" id="1.20.920.30">
    <property type="match status" value="1"/>
</dbReference>
<dbReference type="Gene3D" id="3.10.490.20">
    <property type="match status" value="1"/>
</dbReference>
<dbReference type="Gene3D" id="6.10.140.1060">
    <property type="match status" value="1"/>
</dbReference>
<dbReference type="Gene3D" id="1.20.140.100">
    <property type="entry name" value="Dynein heavy chain, N-terminal domain 2"/>
    <property type="match status" value="1"/>
</dbReference>
<dbReference type="Gene3D" id="3.20.180.20">
    <property type="entry name" value="Dynein heavy chain, N-terminal domain 2"/>
    <property type="match status" value="1"/>
</dbReference>
<dbReference type="Gene3D" id="3.40.50.300">
    <property type="entry name" value="P-loop containing nucleotide triphosphate hydrolases"/>
    <property type="match status" value="5"/>
</dbReference>
<dbReference type="Gene3D" id="1.10.8.720">
    <property type="entry name" value="Region D6 of dynein motor"/>
    <property type="match status" value="1"/>
</dbReference>
<dbReference type="InterPro" id="IPR035699">
    <property type="entry name" value="AAA_6"/>
</dbReference>
<dbReference type="InterPro" id="IPR035706">
    <property type="entry name" value="AAA_9"/>
</dbReference>
<dbReference type="InterPro" id="IPR041658">
    <property type="entry name" value="AAA_lid_11"/>
</dbReference>
<dbReference type="InterPro" id="IPR042219">
    <property type="entry name" value="AAA_lid_11_sf"/>
</dbReference>
<dbReference type="InterPro" id="IPR026983">
    <property type="entry name" value="DHC"/>
</dbReference>
<dbReference type="InterPro" id="IPR054354">
    <property type="entry name" value="DYNC2H1-like_lid"/>
</dbReference>
<dbReference type="InterPro" id="IPR049400">
    <property type="entry name" value="DYNC2H1_AAA_dom"/>
</dbReference>
<dbReference type="InterPro" id="IPR042222">
    <property type="entry name" value="Dynein_2_N"/>
</dbReference>
<dbReference type="InterPro" id="IPR043157">
    <property type="entry name" value="Dynein_AAA1S"/>
</dbReference>
<dbReference type="InterPro" id="IPR041228">
    <property type="entry name" value="Dynein_C"/>
</dbReference>
<dbReference type="InterPro" id="IPR043160">
    <property type="entry name" value="Dynein_C_barrel"/>
</dbReference>
<dbReference type="InterPro" id="IPR024743">
    <property type="entry name" value="Dynein_HC_stalk"/>
</dbReference>
<dbReference type="InterPro" id="IPR024317">
    <property type="entry name" value="Dynein_heavy_chain_D4_dom"/>
</dbReference>
<dbReference type="InterPro" id="IPR004273">
    <property type="entry name" value="Dynein_heavy_D6_P-loop"/>
</dbReference>
<dbReference type="InterPro" id="IPR013602">
    <property type="entry name" value="Dynein_heavy_linker"/>
</dbReference>
<dbReference type="InterPro" id="IPR013594">
    <property type="entry name" value="Dynein_heavy_tail"/>
</dbReference>
<dbReference type="InterPro" id="IPR042228">
    <property type="entry name" value="Dynein_linker_3"/>
</dbReference>
<dbReference type="InterPro" id="IPR027417">
    <property type="entry name" value="P-loop_NTPase"/>
</dbReference>
<dbReference type="PANTHER" id="PTHR10676:SF352">
    <property type="entry name" value="CYTOPLASMIC DYNEIN 2 HEAVY CHAIN 1"/>
    <property type="match status" value="1"/>
</dbReference>
<dbReference type="PANTHER" id="PTHR10676">
    <property type="entry name" value="DYNEIN HEAVY CHAIN FAMILY PROTEIN"/>
    <property type="match status" value="1"/>
</dbReference>
<dbReference type="Pfam" id="PF12774">
    <property type="entry name" value="AAA_6"/>
    <property type="match status" value="1"/>
</dbReference>
<dbReference type="Pfam" id="PF12775">
    <property type="entry name" value="AAA_7"/>
    <property type="match status" value="1"/>
</dbReference>
<dbReference type="Pfam" id="PF12780">
    <property type="entry name" value="AAA_8"/>
    <property type="match status" value="1"/>
</dbReference>
<dbReference type="Pfam" id="PF12781">
    <property type="entry name" value="AAA_9"/>
    <property type="match status" value="1"/>
</dbReference>
<dbReference type="Pfam" id="PF18198">
    <property type="entry name" value="AAA_lid_11"/>
    <property type="match status" value="1"/>
</dbReference>
<dbReference type="Pfam" id="PF08385">
    <property type="entry name" value="DHC_N1"/>
    <property type="match status" value="1"/>
</dbReference>
<dbReference type="Pfam" id="PF08393">
    <property type="entry name" value="DHC_N2"/>
    <property type="match status" value="1"/>
</dbReference>
<dbReference type="Pfam" id="PF22597">
    <property type="entry name" value="DYN_lid"/>
    <property type="match status" value="1"/>
</dbReference>
<dbReference type="Pfam" id="PF21264">
    <property type="entry name" value="DYNC2H1_AAA_dom"/>
    <property type="match status" value="1"/>
</dbReference>
<dbReference type="Pfam" id="PF18199">
    <property type="entry name" value="Dynein_C"/>
    <property type="match status" value="1"/>
</dbReference>
<dbReference type="Pfam" id="PF03028">
    <property type="entry name" value="Dynein_heavy"/>
    <property type="match status" value="1"/>
</dbReference>
<dbReference type="Pfam" id="PF12777">
    <property type="entry name" value="MT"/>
    <property type="match status" value="1"/>
</dbReference>
<dbReference type="SUPFAM" id="SSF52540">
    <property type="entry name" value="P-loop containing nucleoside triphosphate hydrolases"/>
    <property type="match status" value="4"/>
</dbReference>
<name>DYHC2_CAEEL</name>